<comment type="function">
    <molecule>Envelope glycoprotein gp160</molecule>
    <text evidence="1">Oligomerizes in the host endoplasmic reticulum into predominantly trimers. In a second time, gp160 transits in the host Golgi, where glycosylation is completed. The precursor is then proteolytically cleaved in the trans-Golgi and thereby activated by cellular furin or furin-like proteases to produce gp120 and gp41.</text>
</comment>
<comment type="function">
    <molecule>Surface protein gp120</molecule>
    <text evidence="1">Attaches the virus to the host lymphoid cell by binding to the primary receptor CD4. This interaction induces a structural rearrangement creating a high affinity binding site for a chemokine coreceptor like CXCR4 and/or CCR5. Acts as a ligand for CD209/DC-SIGN and CLEC4M/DC-SIGNR, which are respectively found on dendritic cells (DCs), and on endothelial cells of liver sinusoids and lymph node sinuses. These interactions allow capture of viral particles at mucosal surfaces by these cells and subsequent transmission to permissive cells. HIV subverts the migration properties of dendritic cells to gain access to CD4+ T-cells in lymph nodes. Virus transmission to permissive T-cells occurs either in trans (without DCs infection, through viral capture and transmission), or in cis (following DCs productive infection, through the usual CD4-gp120 interaction), thereby inducing a robust infection. In trans infection, bound virions remain infectious over days and it is proposed that they are not degraded, but protected in non-lysosomal acidic organelles within the DCs close to the cell membrane thus contributing to the viral infectious potential during DCs' migration from the periphery to the lymphoid tissues. On arrival at lymphoid tissues, intact virions recycle back to DCs' cell surface allowing virus transmission to CD4+ T-cells.</text>
</comment>
<comment type="function">
    <molecule>Transmembrane protein gp41</molecule>
    <text evidence="1">Acts as a class I viral fusion protein. Under the current model, the protein has at least 3 conformational states: pre-fusion native state, pre-hairpin intermediate state, and post-fusion hairpin state. During fusion of viral and target intracellular membranes, the coiled coil regions (heptad repeats) assume a trimer-of-hairpins structure, positioning the fusion peptide in close proximity to the C-terminal region of the ectodomain. The formation of this structure appears to drive apposition and subsequent fusion of viral and target cell membranes. Complete fusion occurs in host cell endosomes and is dynamin-dependent, however some lipid transfer might occur at the plasma membrane. The virus undergoes clathrin-dependent internalization long before endosomal fusion, thus minimizing the surface exposure of conserved viral epitopes during fusion and reducing the efficacy of inhibitors targeting these epitopes. Membranes fusion leads to delivery of the nucleocapsid into the cytoplasm.</text>
</comment>
<comment type="subunit">
    <molecule>Surface protein gp120</molecule>
    <text evidence="1 6">The mature envelope protein (Env) consists of a homotrimer of non-covalently associated gp120-gp41 heterodimers. The resulting complex protrudes from the virus surface as a spike. There seems to be as few as 10 spikes on the average virion. Interacts with host CD4, CCR5 and CXCR4. Gp120 also interacts with the C-type lectins CD209/DC-SIGN and CLEC4M/DC-SIGNR (collectively referred to as DC-SIGN(R)). Gp120 and gp41 interact with GalCer. Gp120 interacts with host ITGA4/ITGB7 complex; on CD4+ T-cells, this interaction results in rapid activation of integrin ITGAL/LFA-1, which facilitates efficient cell-to-cell spreading of HIV-1. Gp120 interacts with cell-associated heparan sulfate; this interaction increases virus infectivity on permissive cells and may be involved in infection of CD4- cells.</text>
</comment>
<comment type="subunit">
    <molecule>Transmembrane protein gp41</molecule>
    <text evidence="1 6">The mature envelope protein (Env) consists of a homotrimer of non-covalently associated gp120-gp41 heterodimers. The resulting complex protrudes from the virus surface as a spike. There seems to be as few as 10 spikes on the average virion.</text>
</comment>
<comment type="subcellular location">
    <molecule>Surface protein gp120</molecule>
    <subcellularLocation>
        <location evidence="1">Virion membrane</location>
        <topology evidence="1">Peripheral membrane protein</topology>
    </subcellularLocation>
    <subcellularLocation>
        <location evidence="1">Host cell membrane</location>
        <topology evidence="1">Peripheral membrane protein</topology>
    </subcellularLocation>
    <subcellularLocation>
        <location evidence="1">Host endosome membrane</location>
        <topology evidence="1">Single-pass type I membrane protein</topology>
    </subcellularLocation>
    <text evidence="1">The surface protein is not anchored to the viral envelope, but associates with the extravirion surface through its binding to TM. It is probably concentrated at the site of budding and incorporated into the virions possibly by contacts between the cytoplasmic tail of Env and the N-terminus of Gag.</text>
</comment>
<comment type="subcellular location">
    <molecule>Transmembrane protein gp41</molecule>
    <subcellularLocation>
        <location evidence="1">Virion membrane</location>
        <topology evidence="1">Single-pass type I membrane protein</topology>
    </subcellularLocation>
    <subcellularLocation>
        <location evidence="1">Host cell membrane</location>
        <topology evidence="1">Single-pass type I membrane protein</topology>
    </subcellularLocation>
    <subcellularLocation>
        <location evidence="1">Host endosome membrane</location>
        <topology evidence="1">Single-pass type I membrane protein</topology>
    </subcellularLocation>
    <text evidence="1">It is probably concentrated at the site of budding and incorporated into the virions possibly by contacts between the cytoplasmic tail of Env and the N-terminus of Gag.</text>
</comment>
<comment type="domain">
    <text evidence="1">Some of the most genetically diverse regions of the viral genome are present in Env. They are called variable regions 1 through 5 (V1 through V5). Coreceptor usage of gp120 is determined mainly by the primary structure of the third variable region (V3) in the outer domain of gp120. The sequence of V3 determines which coreceptor, CCR5 and/or CXCR4 (corresponding to R5/macrophage, X4/T cell and R5X4/T cell and macrophage tropism), is used to trigger the fusion potential of the Env complex, and hence which cells the virus can infect. Binding to CCR5 involves a region adjacent in addition to V3.</text>
</comment>
<comment type="domain">
    <text evidence="1">The membrane proximal external region (MPER) present in gp41 is a tryptophan-rich region recognized by the antibodies 2F5, Z13, and 4E10. MPER seems to play a role in fusion.</text>
</comment>
<comment type="domain">
    <text evidence="1">The 17 amino acids long immunosuppressive region is present in many retroviral envelope proteins. Synthetic peptides derived from this relatively conserved sequence inhibit immune function in vitro and in vivo.</text>
</comment>
<comment type="domain">
    <text evidence="1">The YXXL motif is involved in determining the exact site of viral release at the surface of infected mononuclear cells and promotes endocytosis. YXXL and di-leucine endocytosis motifs interact directly or indirectly with the clathrin adapter complexes, opperate independently, and their activities are not additive.</text>
</comment>
<comment type="domain">
    <text evidence="1">The CD4-binding region is targeted by the antibody b12.</text>
</comment>
<comment type="PTM">
    <text evidence="1">Highly glycosylated by host. The high number of glycan on the protein is reffered to as 'glycan shield' because it contributes to hide protein sequence from adaptive immune system.</text>
</comment>
<comment type="PTM">
    <text evidence="1">Palmitoylation of the transmembrane protein and of Env polyprotein (prior to its proteolytic cleavage) is essential for their association with host cell membrane lipid rafts. Palmitoylation is therefore required for envelope trafficking to classical lipid rafts, but not for viral replication.</text>
</comment>
<comment type="PTM">
    <text evidence="1 3 4 5">Specific enzymatic cleavages in vivo yield mature proteins. Envelope glycoproteins are synthesized as an inactive precursor that is heavily N-glycosylated and processed likely by host cell furin in the Golgi to yield the mature SU and TM proteins. The cleavage site between SU and TM requires the minimal sequence [KR]-X-[KR]-R. About 2 of the 9 disulfide bonds of gp41 are reduced by P4HB/PDI, following binding to CD4 receptor.</text>
</comment>
<comment type="miscellaneous">
    <text evidence="1">Inhibitors targeting HIV-1 viral envelope proteins are used as antiretroviral drugs. Attachment of virions to the cell surface via non-specific interactions and CD4 binding can be blocked by inhibitors that include cyanovirin-N, cyclotriazadisulfonamide analogs, PRO 2000, TNX 355 and PRO 542. In addition, BMS 806 can block CD4-induced conformational changes. Env interactions with the coreceptor molecules can be targeted by CCR5 antagonists including SCH-D, maraviroc (UK 427857) and aplaviroc (GW 873140), and the CXCR4 antagonist AMD 070. Fusion of viral and cellular membranes can be inhibited by peptides such as enfuvirtide and tifuvirtide (T 1249). Resistance to inhibitors associated with mutations in Env are observed. Most of the time, single mutations confer only a modest reduction in drug susceptibility. Combination of several mutations is usually required to develop a high-level drug resistance.</text>
</comment>
<comment type="miscellaneous">
    <text evidence="1">HIV-1 lineages are divided in three main groups, M (for Major), O (for Outlier), and N (for New, or Non-M, Non-O). The vast majority of strains found worldwide belong to the group M. Group O seems to be endemic to and largely confined to Cameroon and neighboring countries in West Central Africa, where these viruses represent a small minority of HIV-1 strains. The group N is represented by a limited number of isolates from Cameroonian persons. The group M is further subdivided in 9 clades or subtypes (A to D, F to H, J and K).</text>
</comment>
<comment type="similarity">
    <text evidence="1">Belongs to the HIV-1 env protein family.</text>
</comment>
<comment type="online information" name="hivdb">
    <link uri="https://hivdb.stanford.edu"/>
    <text>HIV drug resistance database</text>
</comment>
<comment type="online information" name="HIV drug resistance mutations">
    <link uri="https://www.iasusa.org/hiv-drug-resistance/hiv-drug-resistance-mutations/"/>
</comment>
<sequence>MRVKEKYQHLWRWGWRWGTMLLGMLMICSATEKLWVTVYYGVPVWKEATTTLFCASDAKAYDTEVHNVWATHACVPTDPNPQEVVLVNVTENFNMWKNDMVEQMHEDIISLWDQSLKPCVKLTPLCVSLKCTDLKNDTNTNSSSGRMIMEKGEIKNCSFNISTSIRGKVQKEYAFFYKLDIIPIDNDTTSYTLTSCNTSVITQACPKVSFEPIPIHYCAPAGFAILKCNNKTFNGTGPCTNVSTVQCTHGIRPVVSTQLLLNGSLAEEEVVIRSANFTDNAKTIIVQLNQSVEINCTRPNNNTRKSIRIQRGPGRAFVTIGKIGNMRQAHCNISRAKWNNTLKQIDSKLREQFGNNKTIIFKQSSGGDPEIVTHSFNCGGEFFYCNSTQLFNSTWFNSTWSTKGSNNTEGSDTITLPCRIKQIINMWQEVGKAMYAPPISGQIRCSSNITGLLLTRDGGNSNNESEIFRPGGGDMRDNWRSELYKYKVVKIEPLGVAPTKAKRRVVQREKRAVGIGALFLGFLGAAGSTMGAASMTLTVQARQLLSGIVQQQNNLLRAIEAQQHLLQLTVWGIKQLQARILAVERYLKDQQLLGIWGCSGKLICTTAVPWNASWSNKSLEQIWNNMTWMEWDREINNYTSLIHSLIEESQNQQEKNEQELLELDKWASLWNWFNITNWLWYIKLFIMIVGGLVGLRIVFAVLSVVNRVRQGYSPLSFQTHLPIPRGPDRPEGIEEEGGERDRDRSIRLVNGSLALIWDDLRSLCLFSYHRLRDLLLIVTRIVELLGRRGWEALKYWWNLLQYWSQELKNSAVSLLNATAIAVAEGTDRVIEVVQGAYRAIRHIPRRIRQGLERILL</sequence>
<feature type="signal peptide" evidence="1">
    <location>
        <begin position="1"/>
        <end position="32"/>
    </location>
</feature>
<feature type="chain" id="PRO_0000239239" description="Envelope glycoprotein gp160" evidence="1">
    <location>
        <begin position="33"/>
        <end position="856"/>
    </location>
</feature>
<feature type="chain" id="PRO_0000038371" description="Surface protein gp120" evidence="1">
    <location>
        <begin position="33"/>
        <end position="511"/>
    </location>
</feature>
<feature type="chain" id="PRO_0000038372" description="Transmembrane protein gp41" evidence="1">
    <location>
        <begin position="512"/>
        <end position="856"/>
    </location>
</feature>
<feature type="topological domain" description="Extracellular" evidence="1">
    <location>
        <begin position="33"/>
        <end position="684"/>
    </location>
</feature>
<feature type="transmembrane region" description="Helical" evidence="1">
    <location>
        <begin position="685"/>
        <end position="705"/>
    </location>
</feature>
<feature type="topological domain" description="Cytoplasmic" evidence="1">
    <location>
        <begin position="706"/>
        <end position="856"/>
    </location>
</feature>
<feature type="region of interest" description="V1" evidence="1">
    <location>
        <begin position="131"/>
        <end position="156"/>
    </location>
</feature>
<feature type="region of interest" description="V2" evidence="1">
    <location>
        <begin position="157"/>
        <end position="196"/>
    </location>
</feature>
<feature type="region of interest" description="V3" evidence="1">
    <location>
        <begin position="296"/>
        <end position="330"/>
    </location>
</feature>
<feature type="region of interest" description="CD4-binding loop" evidence="1">
    <location>
        <begin position="364"/>
        <end position="374"/>
    </location>
</feature>
<feature type="region of interest" description="V4" evidence="1">
    <location>
        <begin position="385"/>
        <end position="418"/>
    </location>
</feature>
<feature type="region of interest" description="V5">
    <location>
        <begin position="461"/>
        <end position="471"/>
    </location>
</feature>
<feature type="region of interest" description="V5" evidence="1">
    <location>
        <begin position="463"/>
        <end position="471"/>
    </location>
</feature>
<feature type="region of interest" description="Fusion peptide" evidence="1">
    <location>
        <begin position="512"/>
        <end position="532"/>
    </location>
</feature>
<feature type="region of interest" description="Immunosuppression" evidence="1">
    <location>
        <begin position="574"/>
        <end position="592"/>
    </location>
</feature>
<feature type="region of interest" description="MPER; binding to GalCer" evidence="1">
    <location>
        <begin position="662"/>
        <end position="683"/>
    </location>
</feature>
<feature type="region of interest" description="Involved in GalCer binding">
    <location>
        <begin position="662"/>
        <end position="667"/>
    </location>
</feature>
<feature type="region of interest" description="Disordered" evidence="2">
    <location>
        <begin position="721"/>
        <end position="740"/>
    </location>
</feature>
<feature type="coiled-coil region" evidence="1">
    <location>
        <begin position="633"/>
        <end position="667"/>
    </location>
</feature>
<feature type="short sequence motif" description="YXXL motif; contains endocytosis signal" evidence="1">
    <location>
        <begin position="712"/>
        <end position="715"/>
    </location>
</feature>
<feature type="short sequence motif" description="Di-leucine internalization motif" evidence="1">
    <location>
        <begin position="855"/>
        <end position="856"/>
    </location>
</feature>
<feature type="site" description="Cleavage; by host furin" evidence="1">
    <location>
        <begin position="511"/>
        <end position="512"/>
    </location>
</feature>
<feature type="lipid moiety-binding region" description="S-palmitoyl cysteine; by host" evidence="1">
    <location>
        <position position="764"/>
    </location>
</feature>
<feature type="glycosylation site" description="N-linked (GlcNAc...) asparagine; by host" evidence="1 7">
    <location>
        <position position="88"/>
    </location>
</feature>
<feature type="glycosylation site" description="N-linked (GlcNAc...) asparagine; by host" evidence="1 7">
    <location>
        <position position="136"/>
    </location>
</feature>
<feature type="glycosylation site" description="N-linked (GlcNAc...) asparagine; by host" evidence="1 7">
    <location>
        <position position="141"/>
    </location>
</feature>
<feature type="glycosylation site" description="N-linked (GlcNAc...) asparagine; by host" evidence="1 7">
    <location>
        <position position="156"/>
    </location>
</feature>
<feature type="glycosylation site" description="N-linked (GlcNAc...) asparagine; by host" evidence="1 7">
    <location>
        <position position="160"/>
    </location>
</feature>
<feature type="glycosylation site" description="N-linked (GlcNAc...) asparagine; by host" evidence="1 7">
    <location>
        <position position="186"/>
    </location>
</feature>
<feature type="glycosylation site" description="N-linked (GlcNAc...) asparagine; by host" evidence="1 7">
    <location>
        <position position="197"/>
    </location>
</feature>
<feature type="glycosylation site" description="N-linked (GlcNAc...) asparagine; by host" evidence="1 7">
    <location>
        <position position="230"/>
    </location>
</feature>
<feature type="glycosylation site" description="N-linked (GlcNAc...) asparagine; by host" evidence="1 7">
    <location>
        <position position="234"/>
    </location>
</feature>
<feature type="glycosylation site" description="N-linked (GlcNAc...) asparagine; by host" evidence="1 7">
    <location>
        <position position="241"/>
    </location>
</feature>
<feature type="glycosylation site" description="N-linked (GlcNAc...) asparagine; by host" evidence="1 7">
    <location>
        <position position="262"/>
    </location>
</feature>
<feature type="glycosylation site" description="N-linked (GlcNAc...) asparagine; by host" evidence="1 7">
    <location>
        <position position="276"/>
    </location>
</feature>
<feature type="glycosylation site" description="N-linked (GlcNAc...) asparagine; by host" evidence="1 7">
    <location>
        <position position="289"/>
    </location>
</feature>
<feature type="glycosylation site" description="N-linked (GlcNAc...) asparagine; by host" evidence="1 7">
    <location>
        <position position="295"/>
    </location>
</feature>
<feature type="glycosylation site" description="N-linked (GlcNAc...) asparagine; by host" evidence="1 7">
    <location>
        <position position="301"/>
    </location>
</feature>
<feature type="glycosylation site" description="N-linked (GlcNAc...) asparagine; by host" evidence="1 7">
    <location>
        <position position="332"/>
    </location>
</feature>
<feature type="glycosylation site" description="N-linked (GlcNAc...) asparagine; by host" evidence="1 7">
    <location>
        <position position="339"/>
    </location>
</feature>
<feature type="glycosylation site" description="N-linked (GlcNAc...) asparagine; by host" evidence="1 7">
    <location>
        <position position="356"/>
    </location>
</feature>
<feature type="glycosylation site" description="N-linked (GlcNAc...) asparagine; by host" evidence="1 7">
    <location>
        <position position="386"/>
    </location>
</feature>
<feature type="glycosylation site" description="N-linked (GlcNAc...) asparagine; by host" evidence="1 7">
    <location>
        <position position="392"/>
    </location>
</feature>
<feature type="glycosylation site" description="N-linked (GlcNAc...) asparagine; by host" evidence="1 7">
    <location>
        <position position="397"/>
    </location>
</feature>
<feature type="glycosylation site" description="N-linked (GlcNAc...) asparagine; by host" evidence="1 7">
    <location>
        <position position="406"/>
    </location>
</feature>
<feature type="glycosylation site" description="N-linked (GlcNAc...) asparagine; by host" evidence="1 7">
    <location>
        <position position="448"/>
    </location>
</feature>
<feature type="glycosylation site" description="N-linked (GlcNAc...) asparagine; by host" evidence="1 7">
    <location>
        <position position="463"/>
    </location>
</feature>
<feature type="glycosylation site" description="N-linked (GlcNAc...) asparagine; by host" evidence="1">
    <location>
        <position position="611"/>
    </location>
</feature>
<feature type="glycosylation site" description="N-linked (GlcNAc...) asparagine; by host" evidence="1">
    <location>
        <position position="616"/>
    </location>
</feature>
<feature type="glycosylation site" description="N-linked (GlcNAc...) asparagine; by host" evidence="1">
    <location>
        <position position="625"/>
    </location>
</feature>
<feature type="glycosylation site" description="N-linked (GlcNAc...) asparagine; by host" evidence="1">
    <location>
        <position position="637"/>
    </location>
</feature>
<feature type="glycosylation site" description="N-linked (GlcNAc...) asparagine; by host" evidence="1">
    <location>
        <position position="674"/>
    </location>
</feature>
<feature type="disulfide bond" evidence="1 7">
    <location>
        <begin position="54"/>
        <end position="74"/>
    </location>
</feature>
<feature type="disulfide bond" evidence="1 7">
    <location>
        <begin position="119"/>
        <end position="205"/>
    </location>
</feature>
<feature type="disulfide bond" evidence="1 7">
    <location>
        <begin position="126"/>
        <end position="196"/>
    </location>
</feature>
<feature type="disulfide bond" evidence="1 7">
    <location>
        <begin position="131"/>
        <end position="157"/>
    </location>
</feature>
<feature type="disulfide bond" evidence="1 7">
    <location>
        <begin position="218"/>
        <end position="247"/>
    </location>
</feature>
<feature type="disulfide bond" evidence="1 7">
    <location>
        <begin position="228"/>
        <end position="239"/>
    </location>
</feature>
<feature type="disulfide bond" evidence="1 7">
    <location>
        <begin position="296"/>
        <end position="331"/>
    </location>
</feature>
<feature type="disulfide bond" evidence="1 7">
    <location>
        <begin position="378"/>
        <end position="445"/>
    </location>
</feature>
<feature type="disulfide bond" evidence="1 7">
    <location>
        <begin position="385"/>
        <end position="418"/>
    </location>
</feature>
<feature type="disulfide bond" evidence="1">
    <location>
        <begin position="598"/>
        <end position="604"/>
    </location>
</feature>
<feature type="sequence variant" description="In strain: Isolate PV22.">
    <original>K</original>
    <variation>E</variation>
    <location>
        <position position="403"/>
    </location>
</feature>
<feature type="sequence variant" description="In strain: Isolate PV22.">
    <original>I</original>
    <variation>F</variation>
    <location>
        <position position="423"/>
    </location>
</feature>
<feature type="sequence variant" description="In strain: Isolate PV22.">
    <original>S</original>
    <variation>N</variation>
    <location>
        <position position="461"/>
    </location>
</feature>
<feature type="sequence variant" description="In strain: Isolate PV22.">
    <original>S</original>
    <variation>N</variation>
    <location>
        <position position="668"/>
    </location>
</feature>
<feature type="sequence variant" description="In strain: Isolate PV22.">
    <original>F</original>
    <variation>L</variation>
    <location>
        <position position="673"/>
    </location>
</feature>
<feature type="sequence variant" description="In strain: Isolate PV22.">
    <original>V</original>
    <variation>I</variation>
    <location>
        <position position="704"/>
    </location>
</feature>
<feature type="sequence variant" description="In strain: Isolate PV22.">
    <original>I</original>
    <variation>T</variation>
    <location>
        <position position="723"/>
    </location>
</feature>
<feature type="sequence variant" description="In strain: Isolate PV22.">
    <original>G</original>
    <variation>D</variation>
    <location>
        <position position="737"/>
    </location>
</feature>
<feature type="helix" evidence="8">
    <location>
        <begin position="516"/>
        <end position="530"/>
    </location>
</feature>
<feature type="turn" evidence="8">
    <location>
        <begin position="531"/>
        <end position="533"/>
    </location>
</feature>
<feature type="strand" evidence="8">
    <location>
        <begin position="536"/>
        <end position="538"/>
    </location>
</feature>
<feature type="helix" evidence="9">
    <location>
        <begin position="554"/>
        <end position="589"/>
    </location>
</feature>
<evidence type="ECO:0000255" key="1">
    <source>
        <dbReference type="HAMAP-Rule" id="MF_04083"/>
    </source>
</evidence>
<evidence type="ECO:0000256" key="2">
    <source>
        <dbReference type="SAM" id="MobiDB-lite"/>
    </source>
</evidence>
<evidence type="ECO:0000269" key="3">
    <source>
    </source>
</evidence>
<evidence type="ECO:0000269" key="4">
    <source>
    </source>
</evidence>
<evidence type="ECO:0000269" key="5">
    <source>
    </source>
</evidence>
<evidence type="ECO:0000269" key="6">
    <source>
    </source>
</evidence>
<evidence type="ECO:0000269" key="7">
    <source>
    </source>
</evidence>
<evidence type="ECO:0007829" key="8">
    <source>
        <dbReference type="PDB" id="2ARI"/>
    </source>
</evidence>
<evidence type="ECO:0007829" key="9">
    <source>
        <dbReference type="PDB" id="3W19"/>
    </source>
</evidence>
<proteinExistence type="evidence at protein level"/>
<organismHost>
    <name type="scientific">Homo sapiens</name>
    <name type="common">Human</name>
    <dbReference type="NCBI Taxonomy" id="9606"/>
</organismHost>
<reference key="1">
    <citation type="journal article" date="1985" name="Nature">
        <title>Complete nucleotide sequence of the AIDS virus, HTLV-III.</title>
        <authorList>
            <person name="Ratner L."/>
            <person name="Haseltine W.A."/>
            <person name="Patarca R."/>
            <person name="Livak K.J."/>
            <person name="Starcich B.R."/>
            <person name="Josephs S.F."/>
            <person name="Doran E.R."/>
            <person name="Rafalski J.A."/>
            <person name="Whitehorn E.A."/>
            <person name="Baumeister K."/>
            <person name="Ivanoff L."/>
            <person name="Petteway S.R. Jr."/>
            <person name="Pearson M.L."/>
            <person name="Lautenberger J.A."/>
            <person name="Papas T.S."/>
            <person name="Ghrayeb J."/>
            <person name="Chang N.T."/>
            <person name="Gallo R.C."/>
            <person name="Wong-Staal F."/>
        </authorList>
    </citation>
    <scope>NUCLEOTIDE SEQUENCE [GENOMIC RNA]</scope>
</reference>
<reference key="2">
    <citation type="journal article" date="1985" name="Nature">
        <title>Nucleic acid structure and expression of the human AIDS/lymphadenopathy retrovirus.</title>
        <authorList>
            <person name="Muesing M.A."/>
            <person name="Smith D.H."/>
            <person name="Cabradilla C.D."/>
            <person name="Benton C.V."/>
            <person name="Lasky L.A."/>
            <person name="Capon D.J."/>
        </authorList>
    </citation>
    <scope>NUCLEOTIDE SEQUENCE [GENOMIC DNA]</scope>
    <source>
        <strain>Isolate PV22</strain>
    </source>
</reference>
<reference key="3">
    <citation type="journal article" date="1988" name="Cell">
        <title>Endoproteolytic cleavage of gp160 is required for the activation of human immunodeficiency virus.</title>
        <authorList>
            <person name="McCune J.M."/>
            <person name="Rabin L.B."/>
            <person name="Feinberg M.B."/>
            <person name="Lieberman M."/>
            <person name="Kosek J.C."/>
            <person name="Reyes G.R."/>
            <person name="Weissman I.L."/>
        </authorList>
    </citation>
    <scope>PROTEOLYTIC PROCESSING OF POLYPROTEIN</scope>
</reference>
<reference key="4">
    <citation type="journal article" date="1990" name="J. Biol. Chem.">
        <title>Assignment of intrachain disulfide bonds and characterization of potential glycosylation sites of the type 1 recombinant human immunodeficiency virus envelope glycoprotein (gp120) expressed in Chinese hamster ovary cells.</title>
        <authorList>
            <person name="Leonard C.K."/>
            <person name="Spellman M.W."/>
            <person name="Riddle L."/>
            <person name="Harris R.J."/>
            <person name="Thomas J.N."/>
            <person name="Gregory T.J."/>
        </authorList>
    </citation>
    <scope>PROTEIN SEQUENCE OF C-TERMINUS</scope>
    <scope>DISULFIDE BONDS</scope>
    <scope>GLYCOSYLATION AT ASN-88; ASN-136; ASN-141; ASN-156; ASN-160; ASN-186; ASN-197; ASN-230; ASN-234; ASN-241; ASN-262; ASN-276; ASN-289; ASN-295; ASN-301; ASN-332; ASN-339; ASN-356; ASN-386; ASN-392; ASN-397; ASN-406; ASN-448 AND ASN-463</scope>
    <scope>STRUCTURE OF CARBOHYDRATES</scope>
</reference>
<reference key="5">
    <citation type="journal article" date="1990" name="J. Virol.">
        <title>CD4 is retained in the endoplasmic reticulum by the human immunodeficiency virus type 1 glycoprotein precursor.</title>
        <authorList>
            <person name="Crise B."/>
            <person name="Buonocore L."/>
            <person name="Rose J.K."/>
        </authorList>
    </citation>
    <scope>INTERACTION OF GLYCOPROTEIN 120 WITH HOST CD4</scope>
</reference>
<reference key="6">
    <citation type="journal article" date="2001" name="J. Immunol.">
        <title>Secretory IgA specific for a conserved epitope on gp41 envelope glycoprotein inhibits epithelial transcytosis of HIV-1.</title>
        <authorList>
            <person name="Alfsen A."/>
            <person name="Iniguez P."/>
            <person name="Bouguyon E."/>
            <person name="Bomsel M."/>
        </authorList>
    </citation>
    <scope>INTERACTION OF TRANSMEMBRANE PROTEIN GP41 WITH GALACTOSYL CERAMIDE</scope>
</reference>
<reference key="7">
    <citation type="journal article" date="2001" name="J. Infect. Dis.">
        <title>The catalytic activity of protein disulfide isomerase is involved in human immunodeficiency virus envelope-mediated membrane fusion after CD4 cell binding.</title>
        <authorList>
            <person name="Fenouillet E."/>
            <person name="Barbouche R."/>
            <person name="Courageot J."/>
            <person name="Miquelis R."/>
        </authorList>
    </citation>
    <scope>REDUCTION OF SURFACE PROTEIN GP120 DISULFIDE BONDS BY P4HB/PDI</scope>
</reference>
<reference key="8">
    <citation type="journal article" date="2003" name="J. Biol. Chem.">
        <title>Protein-disulfide isomerase-mediated reduction of two disulfide bonds of HIV envelope glycoprotein 120 occurs post-CXCR4 binding and is required for fusion.</title>
        <authorList>
            <person name="Barbouche R."/>
            <person name="Miquelis R."/>
            <person name="Jones I.M."/>
            <person name="Fenouillet E."/>
        </authorList>
    </citation>
    <scope>REDUCTION OF SURFACE PROTEIN GP120 DISULFIDE BONDS BY P4HB/PDI</scope>
</reference>
<reference key="9">
    <citation type="journal article" date="2004" name="Blood">
        <title>Thiol/disulfide exchange is a prerequisite for CXCR4-tropic HIV-1 envelope-mediated T-cell fusion during viral entry.</title>
        <authorList>
            <person name="Markovic I."/>
            <person name="Stantchev T.S."/>
            <person name="Fields K.H."/>
            <person name="Tiffany L.J."/>
            <person name="Tomic M."/>
            <person name="Weiss C.D."/>
            <person name="Broder C.C."/>
            <person name="Strebel K."/>
            <person name="Clouse K.A."/>
        </authorList>
    </citation>
    <scope>REDUCTION OF SURFACE PROTEIN GP120 DISULFIDE BONDS BY P4HB/PDI</scope>
</reference>
<reference key="10">
    <citation type="journal article" date="2005" name="Mol. Pharmacol.">
        <title>Glycosaminoglycans and protein disulfide isomerase-mediated reduction of HIV Env.</title>
        <authorList>
            <person name="Barbouche R."/>
            <person name="Lortat-Jacob H."/>
            <person name="Jones I.M."/>
            <person name="Fenouillet E."/>
        </authorList>
    </citation>
    <scope>REDUCTION OF SURFACE PROTEIN GP120 DISULFIDE BONDS BY P4HB/PDI</scope>
</reference>
<reference key="11">
    <citation type="journal article" date="2003" name="APMIS">
        <title>Pathogens target DC-SIGN to influence their fate DC-SIGN functions as a pathogen receptor with broad specificity.</title>
        <authorList>
            <person name="Geijtenbeek T.B."/>
            <person name="van Kooyk Y."/>
        </authorList>
    </citation>
    <scope>REVIEW</scope>
</reference>
<reference key="12">
    <citation type="journal article" date="2003" name="Biochim. Biophys. Acta">
        <title>The HIV Env-mediated fusion reaction.</title>
        <authorList>
            <person name="Gallo S.A."/>
            <person name="Finnegan C.M."/>
            <person name="Viard M."/>
            <person name="Raviv Y."/>
            <person name="Dimitrov A."/>
            <person name="Rawat S.S."/>
            <person name="Puri A."/>
            <person name="Durell S."/>
            <person name="Blumenthal R."/>
        </authorList>
    </citation>
    <scope>REVIEW</scope>
</reference>
<reference key="13">
    <citation type="journal article" date="2005" name="Cell Death Differ.">
        <title>Mechanisms of apoptosis induction by the HIV-1 envelope.</title>
        <authorList>
            <person name="Perfettini J.-L."/>
            <person name="Castedo M."/>
            <person name="Roumier T."/>
            <person name="Andreau K."/>
            <person name="Nardacci R."/>
            <person name="Piacentini M."/>
            <person name="Kroemer G."/>
        </authorList>
    </citation>
    <scope>REVIEW</scope>
</reference>
<reference key="14">
    <citation type="journal article" date="2005" name="AIDS Res. Hum. Retroviruses">
        <title>V3: HIV's switch-hitter.</title>
        <authorList>
            <person name="Hartley O."/>
            <person name="Klasse P.J."/>
            <person name="Sattentau Q.J."/>
            <person name="Moore J.P."/>
        </authorList>
    </citation>
    <scope>REVIEW</scope>
</reference>
<reference key="15">
    <citation type="journal article" date="2005" name="Drugs">
        <title>Emerging drug targets for antiretroviral therapy.</title>
        <authorList>
            <person name="Reeves J.D."/>
            <person name="Piefer A.J."/>
        </authorList>
    </citation>
    <scope>REVIEW</scope>
</reference>
<reference key="16">
    <citation type="journal article" date="2006" name="EMBO J.">
        <title>HIV and the chemokine system: 10 years later.</title>
        <authorList>
            <person name="Lusso P."/>
        </authorList>
    </citation>
    <scope>REVIEW</scope>
</reference>
<dbReference type="EMBL" id="M15654">
    <property type="protein sequence ID" value="AAA44205.1"/>
    <property type="molecule type" value="Genomic_RNA"/>
</dbReference>
<dbReference type="EMBL" id="K02083">
    <property type="protein sequence ID" value="AAB59873.1"/>
    <property type="molecule type" value="Genomic_DNA"/>
</dbReference>
<dbReference type="EMBL" id="X01762">
    <property type="protein sequence ID" value="CAA25903.1"/>
    <property type="status" value="ALT_SEQ"/>
    <property type="molecule type" value="Genomic_RNA"/>
</dbReference>
<dbReference type="PIR" id="A03973">
    <property type="entry name" value="VCLJH3"/>
</dbReference>
<dbReference type="PIR" id="A03974">
    <property type="entry name" value="VCLJVL"/>
</dbReference>
<dbReference type="PDB" id="2ARI">
    <property type="method" value="NMR"/>
    <property type="chains" value="A=512-541"/>
</dbReference>
<dbReference type="PDB" id="3VGY">
    <property type="method" value="X-ray"/>
    <property type="resolution" value="2.03 A"/>
    <property type="chains" value="C=546-588"/>
</dbReference>
<dbReference type="PDB" id="3VH7">
    <property type="method" value="X-ray"/>
    <property type="resolution" value="2.02 A"/>
    <property type="chains" value="A/C/E=546-588"/>
</dbReference>
<dbReference type="PDB" id="3VU5">
    <property type="method" value="X-ray"/>
    <property type="resolution" value="2.09 A"/>
    <property type="chains" value="A=553-590"/>
</dbReference>
<dbReference type="PDB" id="3VU6">
    <property type="method" value="X-ray"/>
    <property type="resolution" value="2.32 A"/>
    <property type="chains" value="A=553-590"/>
</dbReference>
<dbReference type="PDB" id="3W19">
    <property type="method" value="X-ray"/>
    <property type="resolution" value="1.28 A"/>
    <property type="chains" value="C=553-590"/>
</dbReference>
<dbReference type="PDB" id="6ME1">
    <property type="method" value="X-ray"/>
    <property type="resolution" value="1.97 A"/>
    <property type="chains" value="E/F=512-521"/>
</dbReference>
<dbReference type="PDBsum" id="2ARI"/>
<dbReference type="PDBsum" id="3VGY"/>
<dbReference type="PDBsum" id="3VH7"/>
<dbReference type="PDBsum" id="3VU5"/>
<dbReference type="PDBsum" id="3VU6"/>
<dbReference type="PDBsum" id="3W19"/>
<dbReference type="PDBsum" id="6ME1"/>
<dbReference type="BMRB" id="P03375"/>
<dbReference type="SMR" id="P03375"/>
<dbReference type="MINT" id="P03375"/>
<dbReference type="ChEMBL" id="CHEMBL5057"/>
<dbReference type="GlyCosmos" id="P03375">
    <property type="glycosylation" value="29 sites, No reported glycans"/>
</dbReference>
<dbReference type="iPTMnet" id="P03375"/>
<dbReference type="ABCD" id="P03375">
    <property type="antibodies" value="2 sequenced antibodies"/>
</dbReference>
<dbReference type="Reactome" id="R-HSA-5621480">
    <property type="pathway name" value="Dectin-2 family"/>
</dbReference>
<dbReference type="EvolutionaryTrace" id="P03375"/>
<dbReference type="Proteomes" id="UP000007690">
    <property type="component" value="Genome"/>
</dbReference>
<dbReference type="Proteomes" id="UP000107234">
    <property type="component" value="Genome"/>
</dbReference>
<dbReference type="Proteomes" id="UP000126245">
    <property type="component" value="Genome"/>
</dbReference>
<dbReference type="GO" id="GO:0044175">
    <property type="term" value="C:host cell endosome membrane"/>
    <property type="evidence" value="ECO:0007669"/>
    <property type="project" value="UniProtKB-SubCell"/>
</dbReference>
<dbReference type="GO" id="GO:0044220">
    <property type="term" value="C:host cell perinuclear region of cytoplasm"/>
    <property type="evidence" value="ECO:0000314"/>
    <property type="project" value="UniProtKB"/>
</dbReference>
<dbReference type="GO" id="GO:0044538">
    <property type="term" value="C:host cell periphery"/>
    <property type="evidence" value="ECO:0000314"/>
    <property type="project" value="UniProtKB"/>
</dbReference>
<dbReference type="GO" id="GO:0020002">
    <property type="term" value="C:host cell plasma membrane"/>
    <property type="evidence" value="ECO:0007669"/>
    <property type="project" value="UniProtKB-SubCell"/>
</dbReference>
<dbReference type="GO" id="GO:0016020">
    <property type="term" value="C:membrane"/>
    <property type="evidence" value="ECO:0007669"/>
    <property type="project" value="UniProtKB-UniRule"/>
</dbReference>
<dbReference type="GO" id="GO:0019031">
    <property type="term" value="C:viral envelope"/>
    <property type="evidence" value="ECO:0007669"/>
    <property type="project" value="UniProtKB-KW"/>
</dbReference>
<dbReference type="GO" id="GO:0055036">
    <property type="term" value="C:virion membrane"/>
    <property type="evidence" value="ECO:0007669"/>
    <property type="project" value="UniProtKB-SubCell"/>
</dbReference>
<dbReference type="GO" id="GO:0042609">
    <property type="term" value="F:CD4 receptor binding"/>
    <property type="evidence" value="ECO:0000353"/>
    <property type="project" value="UniProtKB"/>
</dbReference>
<dbReference type="GO" id="GO:0044877">
    <property type="term" value="F:protein-containing complex binding"/>
    <property type="evidence" value="ECO:0000314"/>
    <property type="project" value="UniProtKB"/>
</dbReference>
<dbReference type="GO" id="GO:0005198">
    <property type="term" value="F:structural molecule activity"/>
    <property type="evidence" value="ECO:0007669"/>
    <property type="project" value="UniProtKB-UniRule"/>
</dbReference>
<dbReference type="GO" id="GO:0075512">
    <property type="term" value="P:clathrin-dependent endocytosis of virus by host cell"/>
    <property type="evidence" value="ECO:0007669"/>
    <property type="project" value="UniProtKB-UniRule"/>
</dbReference>
<dbReference type="GO" id="GO:0039654">
    <property type="term" value="P:fusion of virus membrane with host endosome membrane"/>
    <property type="evidence" value="ECO:0007669"/>
    <property type="project" value="UniProtKB-UniRule"/>
</dbReference>
<dbReference type="GO" id="GO:0019064">
    <property type="term" value="P:fusion of virus membrane with host plasma membrane"/>
    <property type="evidence" value="ECO:0007669"/>
    <property type="project" value="UniProtKB-UniRule"/>
</dbReference>
<dbReference type="GO" id="GO:1903908">
    <property type="term" value="P:positive regulation of plasma membrane raft polarization"/>
    <property type="evidence" value="ECO:0007669"/>
    <property type="project" value="UniProtKB-UniRule"/>
</dbReference>
<dbReference type="GO" id="GO:1903911">
    <property type="term" value="P:positive regulation of receptor clustering"/>
    <property type="evidence" value="ECO:0007669"/>
    <property type="project" value="UniProtKB-UniRule"/>
</dbReference>
<dbReference type="GO" id="GO:0019082">
    <property type="term" value="P:viral protein processing"/>
    <property type="evidence" value="ECO:0007669"/>
    <property type="project" value="UniProtKB-UniRule"/>
</dbReference>
<dbReference type="GO" id="GO:0019062">
    <property type="term" value="P:virion attachment to host cell"/>
    <property type="evidence" value="ECO:0007669"/>
    <property type="project" value="UniProtKB-UniRule"/>
</dbReference>
<dbReference type="CDD" id="cd09909">
    <property type="entry name" value="HIV-1-like_HR1-HR2"/>
    <property type="match status" value="1"/>
</dbReference>
<dbReference type="FunFam" id="1.10.287.210:FF:000001">
    <property type="entry name" value="Envelope glycoprotein gp160"/>
    <property type="match status" value="1"/>
</dbReference>
<dbReference type="FunFam" id="1.20.5.490:FF:000001">
    <property type="entry name" value="Envelope glycoprotein gp160"/>
    <property type="match status" value="1"/>
</dbReference>
<dbReference type="FunFam" id="2.170.40.20:FF:000001">
    <property type="entry name" value="Envelope glycoprotein gp160"/>
    <property type="match status" value="1"/>
</dbReference>
<dbReference type="FunFam" id="2.170.40.20:FF:000003">
    <property type="entry name" value="Envelope glycoprotein gp160"/>
    <property type="match status" value="1"/>
</dbReference>
<dbReference type="Gene3D" id="1.10.287.210">
    <property type="match status" value="1"/>
</dbReference>
<dbReference type="Gene3D" id="2.170.40.20">
    <property type="entry name" value="Human immunodeficiency virus 1, Gp160, envelope glycoprotein"/>
    <property type="match status" value="2"/>
</dbReference>
<dbReference type="Gene3D" id="1.20.5.490">
    <property type="entry name" value="Single helix bin"/>
    <property type="match status" value="1"/>
</dbReference>
<dbReference type="HAMAP" id="MF_04083">
    <property type="entry name" value="HIV_ENV"/>
    <property type="match status" value="1"/>
</dbReference>
<dbReference type="InterPro" id="IPR036377">
    <property type="entry name" value="Gp120_core_sf"/>
</dbReference>
<dbReference type="InterPro" id="IPR037527">
    <property type="entry name" value="Gp160"/>
</dbReference>
<dbReference type="InterPro" id="IPR000328">
    <property type="entry name" value="GP41-like"/>
</dbReference>
<dbReference type="InterPro" id="IPR000777">
    <property type="entry name" value="HIV1_Gp120"/>
</dbReference>
<dbReference type="Pfam" id="PF00516">
    <property type="entry name" value="GP120"/>
    <property type="match status" value="1"/>
</dbReference>
<dbReference type="Pfam" id="PF00517">
    <property type="entry name" value="GP41"/>
    <property type="match status" value="1"/>
</dbReference>
<dbReference type="SUPFAM" id="SSF56502">
    <property type="entry name" value="gp120 core"/>
    <property type="match status" value="1"/>
</dbReference>
<dbReference type="SUPFAM" id="SSF58069">
    <property type="entry name" value="Virus ectodomain"/>
    <property type="match status" value="1"/>
</dbReference>
<organism>
    <name type="scientific">Human immunodeficiency virus type 1 group M subtype B (isolate BH10)</name>
    <name type="common">HIV-1</name>
    <dbReference type="NCBI Taxonomy" id="11678"/>
    <lineage>
        <taxon>Viruses</taxon>
        <taxon>Riboviria</taxon>
        <taxon>Pararnavirae</taxon>
        <taxon>Artverviricota</taxon>
        <taxon>Revtraviricetes</taxon>
        <taxon>Ortervirales</taxon>
        <taxon>Retroviridae</taxon>
        <taxon>Orthoretrovirinae</taxon>
        <taxon>Lentivirus</taxon>
        <taxon>Human immunodeficiency virus type 1</taxon>
    </lineage>
</organism>
<gene>
    <name evidence="1" type="primary">env</name>
</gene>
<protein>
    <recommendedName>
        <fullName evidence="1">Envelope glycoprotein gp160</fullName>
    </recommendedName>
    <alternativeName>
        <fullName evidence="1">Env polyprotein</fullName>
    </alternativeName>
    <component>
        <recommendedName>
            <fullName evidence="1">Surface protein gp120</fullName>
            <shortName evidence="1">SU</shortName>
        </recommendedName>
        <alternativeName>
            <fullName evidence="1">Glycoprotein 120</fullName>
            <shortName evidence="1">gp120</shortName>
        </alternativeName>
    </component>
    <component>
        <recommendedName>
            <fullName evidence="1">Transmembrane protein gp41</fullName>
            <shortName evidence="1">TM</shortName>
        </recommendedName>
        <alternativeName>
            <fullName evidence="1">Glycoprotein 41</fullName>
            <shortName evidence="1">gp41</shortName>
        </alternativeName>
    </component>
</protein>
<keyword id="KW-0002">3D-structure</keyword>
<keyword id="KW-0014">AIDS</keyword>
<keyword id="KW-0053">Apoptosis</keyword>
<keyword id="KW-1165">Clathrin-mediated endocytosis of virus by host</keyword>
<keyword id="KW-0165">Cleavage on pair of basic residues</keyword>
<keyword id="KW-0175">Coiled coil</keyword>
<keyword id="KW-0903">Direct protein sequencing</keyword>
<keyword id="KW-1015">Disulfide bond</keyword>
<keyword id="KW-1170">Fusion of virus membrane with host endosomal membrane</keyword>
<keyword id="KW-1168">Fusion of virus membrane with host membrane</keyword>
<keyword id="KW-0325">Glycoprotein</keyword>
<keyword id="KW-1032">Host cell membrane</keyword>
<keyword id="KW-1039">Host endosome</keyword>
<keyword id="KW-1043">Host membrane</keyword>
<keyword id="KW-0945">Host-virus interaction</keyword>
<keyword id="KW-0449">Lipoprotein</keyword>
<keyword id="KW-0472">Membrane</keyword>
<keyword id="KW-0564">Palmitate</keyword>
<keyword id="KW-0732">Signal</keyword>
<keyword id="KW-0812">Transmembrane</keyword>
<keyword id="KW-1133">Transmembrane helix</keyword>
<keyword id="KW-1161">Viral attachment to host cell</keyword>
<keyword id="KW-0261">Viral envelope protein</keyword>
<keyword id="KW-0899">Viral immunoevasion</keyword>
<keyword id="KW-1162">Viral penetration into host cytoplasm</keyword>
<keyword id="KW-0946">Virion</keyword>
<keyword id="KW-1164">Virus endocytosis by host</keyword>
<keyword id="KW-1160">Virus entry into host cell</keyword>
<accession>P03375</accession>
<accession>P03376</accession>
<name>ENV_HV1B1</name>